<comment type="similarity">
    <text evidence="1">Belongs to the bacterial ribosomal protein bS21 family.</text>
</comment>
<proteinExistence type="inferred from homology"/>
<dbReference type="EMBL" id="BX571658">
    <property type="protein sequence ID" value="CAE09763.1"/>
    <property type="molecule type" value="Genomic_DNA"/>
</dbReference>
<dbReference type="RefSeq" id="WP_011138563.1">
    <property type="nucleotide sequence ID" value="NC_005090.1"/>
</dbReference>
<dbReference type="SMR" id="Q7MSA5"/>
<dbReference type="STRING" id="273121.WS0632"/>
<dbReference type="KEGG" id="wsu:WS0632"/>
<dbReference type="eggNOG" id="COG0828">
    <property type="taxonomic scope" value="Bacteria"/>
</dbReference>
<dbReference type="HOGENOM" id="CLU_159258_1_1_7"/>
<dbReference type="Proteomes" id="UP000000422">
    <property type="component" value="Chromosome"/>
</dbReference>
<dbReference type="GO" id="GO:1990904">
    <property type="term" value="C:ribonucleoprotein complex"/>
    <property type="evidence" value="ECO:0007669"/>
    <property type="project" value="UniProtKB-KW"/>
</dbReference>
<dbReference type="GO" id="GO:0005840">
    <property type="term" value="C:ribosome"/>
    <property type="evidence" value="ECO:0007669"/>
    <property type="project" value="UniProtKB-KW"/>
</dbReference>
<dbReference type="GO" id="GO:0003735">
    <property type="term" value="F:structural constituent of ribosome"/>
    <property type="evidence" value="ECO:0007669"/>
    <property type="project" value="InterPro"/>
</dbReference>
<dbReference type="GO" id="GO:0006412">
    <property type="term" value="P:translation"/>
    <property type="evidence" value="ECO:0007669"/>
    <property type="project" value="UniProtKB-UniRule"/>
</dbReference>
<dbReference type="Gene3D" id="1.20.5.1150">
    <property type="entry name" value="Ribosomal protein S8"/>
    <property type="match status" value="1"/>
</dbReference>
<dbReference type="HAMAP" id="MF_00358">
    <property type="entry name" value="Ribosomal_bS21"/>
    <property type="match status" value="1"/>
</dbReference>
<dbReference type="InterPro" id="IPR001911">
    <property type="entry name" value="Ribosomal_bS21"/>
</dbReference>
<dbReference type="InterPro" id="IPR038380">
    <property type="entry name" value="Ribosomal_bS21_sf"/>
</dbReference>
<dbReference type="NCBIfam" id="TIGR00030">
    <property type="entry name" value="S21p"/>
    <property type="match status" value="1"/>
</dbReference>
<dbReference type="Pfam" id="PF01165">
    <property type="entry name" value="Ribosomal_S21"/>
    <property type="match status" value="1"/>
</dbReference>
<dbReference type="PRINTS" id="PR00976">
    <property type="entry name" value="RIBOSOMALS21"/>
</dbReference>
<accession>Q7MSA5</accession>
<organism>
    <name type="scientific">Wolinella succinogenes (strain ATCC 29543 / DSM 1740 / CCUG 13145 / JCM 31913 / LMG 7466 / NCTC 11488 / FDC 602W)</name>
    <name type="common">Vibrio succinogenes</name>
    <dbReference type="NCBI Taxonomy" id="273121"/>
    <lineage>
        <taxon>Bacteria</taxon>
        <taxon>Pseudomonadati</taxon>
        <taxon>Campylobacterota</taxon>
        <taxon>Epsilonproteobacteria</taxon>
        <taxon>Campylobacterales</taxon>
        <taxon>Helicobacteraceae</taxon>
        <taxon>Wolinella</taxon>
    </lineage>
</organism>
<protein>
    <recommendedName>
        <fullName evidence="1">Small ribosomal subunit protein bS21</fullName>
    </recommendedName>
    <alternativeName>
        <fullName evidence="2">30S ribosomal protein S21</fullName>
    </alternativeName>
</protein>
<reference key="1">
    <citation type="journal article" date="2003" name="Proc. Natl. Acad. Sci. U.S.A.">
        <title>Complete genome sequence and analysis of Wolinella succinogenes.</title>
        <authorList>
            <person name="Baar C."/>
            <person name="Eppinger M."/>
            <person name="Raddatz G."/>
            <person name="Simon J."/>
            <person name="Lanz C."/>
            <person name="Klimmek O."/>
            <person name="Nandakumar R."/>
            <person name="Gross R."/>
            <person name="Rosinus A."/>
            <person name="Keller H."/>
            <person name="Jagtap P."/>
            <person name="Linke B."/>
            <person name="Meyer F."/>
            <person name="Lederer H."/>
            <person name="Schuster S.C."/>
        </authorList>
    </citation>
    <scope>NUCLEOTIDE SEQUENCE [LARGE SCALE GENOMIC DNA]</scope>
    <source>
        <strain>ATCC 29543 / DSM 1740 / CCUG 13145 / JCM 31913 / LMG 7466 / NCTC 11488 / FDC 602W</strain>
    </source>
</reference>
<name>RS21_WOLSU</name>
<evidence type="ECO:0000255" key="1">
    <source>
        <dbReference type="HAMAP-Rule" id="MF_00358"/>
    </source>
</evidence>
<evidence type="ECO:0000305" key="2"/>
<gene>
    <name evidence="1" type="primary">rpsU</name>
    <name type="ordered locus">WS0632</name>
</gene>
<keyword id="KW-1185">Reference proteome</keyword>
<keyword id="KW-0687">Ribonucleoprotein</keyword>
<keyword id="KW-0689">Ribosomal protein</keyword>
<sequence length="70" mass="8742">MPGVKAREQESFEEAYRKFKKQADRNLIVTECRARRFFEPMTEKRKKQKINARKKMLKRLYMLRRYESRL</sequence>
<feature type="chain" id="PRO_0000178404" description="Small ribosomal subunit protein bS21">
    <location>
        <begin position="1"/>
        <end position="70"/>
    </location>
</feature>